<reference key="1">
    <citation type="submission" date="2006-06" db="EMBL/GenBank/DDBJ databases">
        <title>Complete sequence of chromosome of Mesorhizobium sp. BNC1.</title>
        <authorList>
            <consortium name="US DOE Joint Genome Institute"/>
            <person name="Copeland A."/>
            <person name="Lucas S."/>
            <person name="Lapidus A."/>
            <person name="Barry K."/>
            <person name="Detter J.C."/>
            <person name="Glavina del Rio T."/>
            <person name="Hammon N."/>
            <person name="Israni S."/>
            <person name="Dalin E."/>
            <person name="Tice H."/>
            <person name="Pitluck S."/>
            <person name="Chertkov O."/>
            <person name="Brettin T."/>
            <person name="Bruce D."/>
            <person name="Han C."/>
            <person name="Tapia R."/>
            <person name="Gilna P."/>
            <person name="Schmutz J."/>
            <person name="Larimer F."/>
            <person name="Land M."/>
            <person name="Hauser L."/>
            <person name="Kyrpides N."/>
            <person name="Mikhailova N."/>
            <person name="Richardson P."/>
        </authorList>
    </citation>
    <scope>NUCLEOTIDE SEQUENCE [LARGE SCALE GENOMIC DNA]</scope>
    <source>
        <strain>BNC1</strain>
    </source>
</reference>
<dbReference type="EC" id="6.1.1.7" evidence="1"/>
<dbReference type="EMBL" id="CP000390">
    <property type="protein sequence ID" value="ABG62662.1"/>
    <property type="status" value="ALT_INIT"/>
    <property type="molecule type" value="Genomic_DNA"/>
</dbReference>
<dbReference type="SMR" id="Q11IW3"/>
<dbReference type="STRING" id="266779.Meso_1266"/>
<dbReference type="KEGG" id="mes:Meso_1266"/>
<dbReference type="eggNOG" id="COG0013">
    <property type="taxonomic scope" value="Bacteria"/>
</dbReference>
<dbReference type="HOGENOM" id="CLU_004485_1_1_5"/>
<dbReference type="OrthoDB" id="9803884at2"/>
<dbReference type="GO" id="GO:0005829">
    <property type="term" value="C:cytosol"/>
    <property type="evidence" value="ECO:0007669"/>
    <property type="project" value="TreeGrafter"/>
</dbReference>
<dbReference type="GO" id="GO:0004813">
    <property type="term" value="F:alanine-tRNA ligase activity"/>
    <property type="evidence" value="ECO:0007669"/>
    <property type="project" value="UniProtKB-UniRule"/>
</dbReference>
<dbReference type="GO" id="GO:0002161">
    <property type="term" value="F:aminoacyl-tRNA deacylase activity"/>
    <property type="evidence" value="ECO:0007669"/>
    <property type="project" value="TreeGrafter"/>
</dbReference>
<dbReference type="GO" id="GO:0005524">
    <property type="term" value="F:ATP binding"/>
    <property type="evidence" value="ECO:0007669"/>
    <property type="project" value="UniProtKB-UniRule"/>
</dbReference>
<dbReference type="GO" id="GO:0000049">
    <property type="term" value="F:tRNA binding"/>
    <property type="evidence" value="ECO:0007669"/>
    <property type="project" value="UniProtKB-KW"/>
</dbReference>
<dbReference type="GO" id="GO:0008270">
    <property type="term" value="F:zinc ion binding"/>
    <property type="evidence" value="ECO:0007669"/>
    <property type="project" value="UniProtKB-UniRule"/>
</dbReference>
<dbReference type="GO" id="GO:0006419">
    <property type="term" value="P:alanyl-tRNA aminoacylation"/>
    <property type="evidence" value="ECO:0007669"/>
    <property type="project" value="UniProtKB-UniRule"/>
</dbReference>
<dbReference type="GO" id="GO:0045892">
    <property type="term" value="P:negative regulation of DNA-templated transcription"/>
    <property type="evidence" value="ECO:0007669"/>
    <property type="project" value="TreeGrafter"/>
</dbReference>
<dbReference type="CDD" id="cd00673">
    <property type="entry name" value="AlaRS_core"/>
    <property type="match status" value="1"/>
</dbReference>
<dbReference type="FunFam" id="2.40.30.130:FF:000001">
    <property type="entry name" value="Alanine--tRNA ligase"/>
    <property type="match status" value="1"/>
</dbReference>
<dbReference type="FunFam" id="3.10.310.40:FF:000001">
    <property type="entry name" value="Alanine--tRNA ligase"/>
    <property type="match status" value="1"/>
</dbReference>
<dbReference type="FunFam" id="3.30.54.20:FF:000001">
    <property type="entry name" value="Alanine--tRNA ligase"/>
    <property type="match status" value="1"/>
</dbReference>
<dbReference type="FunFam" id="3.30.930.10:FF:000004">
    <property type="entry name" value="Alanine--tRNA ligase"/>
    <property type="match status" value="1"/>
</dbReference>
<dbReference type="FunFam" id="3.30.980.10:FF:000004">
    <property type="entry name" value="Alanine--tRNA ligase, cytoplasmic"/>
    <property type="match status" value="1"/>
</dbReference>
<dbReference type="Gene3D" id="2.40.30.130">
    <property type="match status" value="1"/>
</dbReference>
<dbReference type="Gene3D" id="3.10.310.40">
    <property type="match status" value="1"/>
</dbReference>
<dbReference type="Gene3D" id="3.30.54.20">
    <property type="match status" value="1"/>
</dbReference>
<dbReference type="Gene3D" id="6.10.250.550">
    <property type="match status" value="1"/>
</dbReference>
<dbReference type="Gene3D" id="3.30.930.10">
    <property type="entry name" value="Bira Bifunctional Protein, Domain 2"/>
    <property type="match status" value="1"/>
</dbReference>
<dbReference type="Gene3D" id="3.30.980.10">
    <property type="entry name" value="Threonyl-trna Synthetase, Chain A, domain 2"/>
    <property type="match status" value="1"/>
</dbReference>
<dbReference type="HAMAP" id="MF_00036_B">
    <property type="entry name" value="Ala_tRNA_synth_B"/>
    <property type="match status" value="1"/>
</dbReference>
<dbReference type="InterPro" id="IPR045864">
    <property type="entry name" value="aa-tRNA-synth_II/BPL/LPL"/>
</dbReference>
<dbReference type="InterPro" id="IPR002318">
    <property type="entry name" value="Ala-tRNA-lgiase_IIc"/>
</dbReference>
<dbReference type="InterPro" id="IPR018162">
    <property type="entry name" value="Ala-tRNA-ligase_IIc_anticod-bd"/>
</dbReference>
<dbReference type="InterPro" id="IPR018165">
    <property type="entry name" value="Ala-tRNA-synth_IIc_core"/>
</dbReference>
<dbReference type="InterPro" id="IPR018164">
    <property type="entry name" value="Ala-tRNA-synth_IIc_N"/>
</dbReference>
<dbReference type="InterPro" id="IPR050058">
    <property type="entry name" value="Ala-tRNA_ligase"/>
</dbReference>
<dbReference type="InterPro" id="IPR023033">
    <property type="entry name" value="Ala_tRNA_ligase_euk/bac"/>
</dbReference>
<dbReference type="InterPro" id="IPR003156">
    <property type="entry name" value="DHHA1_dom"/>
</dbReference>
<dbReference type="InterPro" id="IPR018163">
    <property type="entry name" value="Thr/Ala-tRNA-synth_IIc_edit"/>
</dbReference>
<dbReference type="InterPro" id="IPR009000">
    <property type="entry name" value="Transl_B-barrel_sf"/>
</dbReference>
<dbReference type="InterPro" id="IPR012947">
    <property type="entry name" value="tRNA_SAD"/>
</dbReference>
<dbReference type="NCBIfam" id="TIGR00344">
    <property type="entry name" value="alaS"/>
    <property type="match status" value="1"/>
</dbReference>
<dbReference type="PANTHER" id="PTHR11777:SF9">
    <property type="entry name" value="ALANINE--TRNA LIGASE, CYTOPLASMIC"/>
    <property type="match status" value="1"/>
</dbReference>
<dbReference type="PANTHER" id="PTHR11777">
    <property type="entry name" value="ALANYL-TRNA SYNTHETASE"/>
    <property type="match status" value="1"/>
</dbReference>
<dbReference type="Pfam" id="PF02272">
    <property type="entry name" value="DHHA1"/>
    <property type="match status" value="1"/>
</dbReference>
<dbReference type="Pfam" id="PF01411">
    <property type="entry name" value="tRNA-synt_2c"/>
    <property type="match status" value="1"/>
</dbReference>
<dbReference type="Pfam" id="PF07973">
    <property type="entry name" value="tRNA_SAD"/>
    <property type="match status" value="1"/>
</dbReference>
<dbReference type="PRINTS" id="PR00980">
    <property type="entry name" value="TRNASYNTHALA"/>
</dbReference>
<dbReference type="SMART" id="SM00863">
    <property type="entry name" value="tRNA_SAD"/>
    <property type="match status" value="1"/>
</dbReference>
<dbReference type="SUPFAM" id="SSF55681">
    <property type="entry name" value="Class II aaRS and biotin synthetases"/>
    <property type="match status" value="1"/>
</dbReference>
<dbReference type="SUPFAM" id="SSF101353">
    <property type="entry name" value="Putative anticodon-binding domain of alanyl-tRNA synthetase (AlaRS)"/>
    <property type="match status" value="1"/>
</dbReference>
<dbReference type="SUPFAM" id="SSF55186">
    <property type="entry name" value="ThrRS/AlaRS common domain"/>
    <property type="match status" value="1"/>
</dbReference>
<dbReference type="SUPFAM" id="SSF50447">
    <property type="entry name" value="Translation proteins"/>
    <property type="match status" value="1"/>
</dbReference>
<dbReference type="PROSITE" id="PS50860">
    <property type="entry name" value="AA_TRNA_LIGASE_II_ALA"/>
    <property type="match status" value="1"/>
</dbReference>
<sequence>MSGVNDIRSAFLDFFKKNGHEVVASGPLVPRNDPTLMFTNAGMVQFKNVFTGMETRPYNRATTAQKCVRAGGKHNDLDNVGYTARHHTFFEMLGNFSFGDYFKDVAIELAWNLVTKEFGLDPKRLLVTVYHTDDEAAGHWRKIAGLPEERIIRIPTSDNFWAMGDTGPCGPCSEIFFDHGEGIPGGPPGSPDEDGDRFIEIWNLVFMQYEQVSPDERINLPRPSIDTGMGLERVAAVLQGVHDNYEIDLFKALIHATEEAVGVRAEGERRPSYKVIADHLRASSFLIADGVLPSNEGRGYVLRRIMRRAMRHAQLLGAEEPLMWRLVPALVREMGQAYPELVRGEALITETLKLEETRFRKTLARGLNLLSDATGGMGEGDRLDGETAFKLYDTYGFPLDLTQDALRQRGVTVDLEGFNAAMERQKAEARASWAGSGEAATEAVWFSVKDRTGATDFLGYETEEAEGIIAALVKDGAMVETAAEGEEVAVVTNQTPFYGESGGQVGDTGTIEGEGFAIEIKNTQKKGEGLFVHFGQVKKGTVRISEPVSLRVDHERRTRIRANHSATHLLHEALREVLGTHVAQKGSLVAPDRLRFDFSHPKPIAEEELQQIEDLANEVVLQNAPVVTRLMAVDDAIAEGAMALFGEKYGDEVRVVSMGKGTQGEKSGKTYSLELCGGTHVNATGDIGLVHIIGEGAVAAGVRRVEALTGAAARRYLDEQERRLKAAASVLKVSPGDLLPRLETLVEERRKLERELSEARKKLALGGGAGAKAGEEREEVGGVGFIGRVVEGISPKDLKPLADEGKKSLGSGVVVFVGTSEEGKASVVVGVTDDLTGRFSAVDLVRKASAAIGGQGGGGRPDMAQAGGPDAANAAAAVEAVRAALAG</sequence>
<organism>
    <name type="scientific">Chelativorans sp. (strain BNC1)</name>
    <dbReference type="NCBI Taxonomy" id="266779"/>
    <lineage>
        <taxon>Bacteria</taxon>
        <taxon>Pseudomonadati</taxon>
        <taxon>Pseudomonadota</taxon>
        <taxon>Alphaproteobacteria</taxon>
        <taxon>Hyphomicrobiales</taxon>
        <taxon>Phyllobacteriaceae</taxon>
        <taxon>Chelativorans</taxon>
    </lineage>
</organism>
<gene>
    <name evidence="1" type="primary">alaS</name>
    <name type="ordered locus">Meso_1266</name>
</gene>
<protein>
    <recommendedName>
        <fullName evidence="1">Alanine--tRNA ligase</fullName>
        <ecNumber evidence="1">6.1.1.7</ecNumber>
    </recommendedName>
    <alternativeName>
        <fullName evidence="1">Alanyl-tRNA synthetase</fullName>
        <shortName evidence="1">AlaRS</shortName>
    </alternativeName>
</protein>
<keyword id="KW-0030">Aminoacyl-tRNA synthetase</keyword>
<keyword id="KW-0067">ATP-binding</keyword>
<keyword id="KW-0963">Cytoplasm</keyword>
<keyword id="KW-0436">Ligase</keyword>
<keyword id="KW-0479">Metal-binding</keyword>
<keyword id="KW-0547">Nucleotide-binding</keyword>
<keyword id="KW-0648">Protein biosynthesis</keyword>
<keyword id="KW-0694">RNA-binding</keyword>
<keyword id="KW-0820">tRNA-binding</keyword>
<keyword id="KW-0862">Zinc</keyword>
<evidence type="ECO:0000255" key="1">
    <source>
        <dbReference type="HAMAP-Rule" id="MF_00036"/>
    </source>
</evidence>
<evidence type="ECO:0000305" key="2"/>
<comment type="function">
    <text evidence="1">Catalyzes the attachment of alanine to tRNA(Ala) in a two-step reaction: alanine is first activated by ATP to form Ala-AMP and then transferred to the acceptor end of tRNA(Ala). Also edits incorrectly charged Ser-tRNA(Ala) and Gly-tRNA(Ala) via its editing domain.</text>
</comment>
<comment type="catalytic activity">
    <reaction evidence="1">
        <text>tRNA(Ala) + L-alanine + ATP = L-alanyl-tRNA(Ala) + AMP + diphosphate</text>
        <dbReference type="Rhea" id="RHEA:12540"/>
        <dbReference type="Rhea" id="RHEA-COMP:9657"/>
        <dbReference type="Rhea" id="RHEA-COMP:9923"/>
        <dbReference type="ChEBI" id="CHEBI:30616"/>
        <dbReference type="ChEBI" id="CHEBI:33019"/>
        <dbReference type="ChEBI" id="CHEBI:57972"/>
        <dbReference type="ChEBI" id="CHEBI:78442"/>
        <dbReference type="ChEBI" id="CHEBI:78497"/>
        <dbReference type="ChEBI" id="CHEBI:456215"/>
        <dbReference type="EC" id="6.1.1.7"/>
    </reaction>
</comment>
<comment type="cofactor">
    <cofactor evidence="1">
        <name>Zn(2+)</name>
        <dbReference type="ChEBI" id="CHEBI:29105"/>
    </cofactor>
    <text evidence="1">Binds 1 zinc ion per subunit.</text>
</comment>
<comment type="subcellular location">
    <subcellularLocation>
        <location evidence="1">Cytoplasm</location>
    </subcellularLocation>
</comment>
<comment type="domain">
    <text evidence="1">Consists of three domains; the N-terminal catalytic domain, the editing domain and the C-terminal C-Ala domain. The editing domain removes incorrectly charged amino acids, while the C-Ala domain, along with tRNA(Ala), serves as a bridge to cooperatively bring together the editing and aminoacylation centers thus stimulating deacylation of misacylated tRNAs.</text>
</comment>
<comment type="similarity">
    <text evidence="1">Belongs to the class-II aminoacyl-tRNA synthetase family.</text>
</comment>
<comment type="sequence caution" evidence="2">
    <conflict type="erroneous initiation">
        <sequence resource="EMBL-CDS" id="ABG62662"/>
    </conflict>
</comment>
<accession>Q11IW3</accession>
<feature type="chain" id="PRO_0000347669" description="Alanine--tRNA ligase">
    <location>
        <begin position="1"/>
        <end position="887"/>
    </location>
</feature>
<feature type="binding site" evidence="1">
    <location>
        <position position="564"/>
    </location>
    <ligand>
        <name>Zn(2+)</name>
        <dbReference type="ChEBI" id="CHEBI:29105"/>
    </ligand>
</feature>
<feature type="binding site" evidence="1">
    <location>
        <position position="568"/>
    </location>
    <ligand>
        <name>Zn(2+)</name>
        <dbReference type="ChEBI" id="CHEBI:29105"/>
    </ligand>
</feature>
<feature type="binding site" evidence="1">
    <location>
        <position position="676"/>
    </location>
    <ligand>
        <name>Zn(2+)</name>
        <dbReference type="ChEBI" id="CHEBI:29105"/>
    </ligand>
</feature>
<feature type="binding site" evidence="1">
    <location>
        <position position="680"/>
    </location>
    <ligand>
        <name>Zn(2+)</name>
        <dbReference type="ChEBI" id="CHEBI:29105"/>
    </ligand>
</feature>
<proteinExistence type="inferred from homology"/>
<name>SYA_CHESB</name>